<comment type="function">
    <text evidence="1">Thiolesterase that catalyzes the hydrolysis of S-D-lactoyl-glutathione to form glutathione and D-lactic acid.</text>
</comment>
<comment type="catalytic activity">
    <reaction evidence="1">
        <text>an S-(2-hydroxyacyl)glutathione + H2O = a 2-hydroxy carboxylate + glutathione + H(+)</text>
        <dbReference type="Rhea" id="RHEA:21864"/>
        <dbReference type="ChEBI" id="CHEBI:15377"/>
        <dbReference type="ChEBI" id="CHEBI:15378"/>
        <dbReference type="ChEBI" id="CHEBI:57925"/>
        <dbReference type="ChEBI" id="CHEBI:58896"/>
        <dbReference type="ChEBI" id="CHEBI:71261"/>
        <dbReference type="EC" id="3.1.2.6"/>
    </reaction>
</comment>
<comment type="cofactor">
    <cofactor evidence="1">
        <name>Zn(2+)</name>
        <dbReference type="ChEBI" id="CHEBI:29105"/>
    </cofactor>
    <text evidence="1">Binds 2 Zn(2+) ions per subunit.</text>
</comment>
<comment type="pathway">
    <text evidence="1">Secondary metabolite metabolism; methylglyoxal degradation; (R)-lactate from methylglyoxal: step 2/2.</text>
</comment>
<comment type="subunit">
    <text evidence="1">Monomer.</text>
</comment>
<comment type="similarity">
    <text evidence="1">Belongs to the metallo-beta-lactamase superfamily. Glyoxalase II family.</text>
</comment>
<feature type="chain" id="PRO_1000068208" description="Hydroxyacylglutathione hydrolase">
    <location>
        <begin position="1"/>
        <end position="253"/>
    </location>
</feature>
<feature type="binding site" evidence="1">
    <location>
        <position position="54"/>
    </location>
    <ligand>
        <name>Zn(2+)</name>
        <dbReference type="ChEBI" id="CHEBI:29105"/>
        <label>1</label>
    </ligand>
</feature>
<feature type="binding site" evidence="1">
    <location>
        <position position="56"/>
    </location>
    <ligand>
        <name>Zn(2+)</name>
        <dbReference type="ChEBI" id="CHEBI:29105"/>
        <label>1</label>
    </ligand>
</feature>
<feature type="binding site" evidence="1">
    <location>
        <position position="58"/>
    </location>
    <ligand>
        <name>Zn(2+)</name>
        <dbReference type="ChEBI" id="CHEBI:29105"/>
        <label>2</label>
    </ligand>
</feature>
<feature type="binding site" evidence="1">
    <location>
        <position position="59"/>
    </location>
    <ligand>
        <name>Zn(2+)</name>
        <dbReference type="ChEBI" id="CHEBI:29105"/>
        <label>2</label>
    </ligand>
</feature>
<feature type="binding site" evidence="1">
    <location>
        <position position="112"/>
    </location>
    <ligand>
        <name>Zn(2+)</name>
        <dbReference type="ChEBI" id="CHEBI:29105"/>
        <label>1</label>
    </ligand>
</feature>
<feature type="binding site" evidence="1">
    <location>
        <position position="131"/>
    </location>
    <ligand>
        <name>Zn(2+)</name>
        <dbReference type="ChEBI" id="CHEBI:29105"/>
        <label>1</label>
    </ligand>
</feature>
<feature type="binding site" evidence="1">
    <location>
        <position position="131"/>
    </location>
    <ligand>
        <name>Zn(2+)</name>
        <dbReference type="ChEBI" id="CHEBI:29105"/>
        <label>2</label>
    </ligand>
</feature>
<feature type="binding site" evidence="1">
    <location>
        <position position="169"/>
    </location>
    <ligand>
        <name>Zn(2+)</name>
        <dbReference type="ChEBI" id="CHEBI:29105"/>
        <label>2</label>
    </ligand>
</feature>
<organism>
    <name type="scientific">Bartonella henselae (strain ATCC 49882 / DSM 28221 / CCUG 30454 / Houston 1)</name>
    <name type="common">Rochalimaea henselae</name>
    <dbReference type="NCBI Taxonomy" id="283166"/>
    <lineage>
        <taxon>Bacteria</taxon>
        <taxon>Pseudomonadati</taxon>
        <taxon>Pseudomonadota</taxon>
        <taxon>Alphaproteobacteria</taxon>
        <taxon>Hyphomicrobiales</taxon>
        <taxon>Bartonellaceae</taxon>
        <taxon>Bartonella</taxon>
    </lineage>
</organism>
<sequence>MLIEQFICREDNFGVLIHDETSGYTAAIDAPESNAIQNALKRRNWTLQTIFLTHHHHDHVEALAELKQIYKAIVIGPEAEKEKISHIDQTLKPDESFLFGTHTILALSTPGHTLGALSYYFPQENLLFAGDTLFSLGCGRLFEGTPAQMLNSLKKLRQLPDETLLYCGHEYTKSNALFALTLDPYNQKLQQRAEDVFLLRAKNAMTLPVTLGQEKKNNPFLRWDNRTLRKTLRMEKETDEEVFAEIRKRKDNF</sequence>
<reference key="1">
    <citation type="journal article" date="2004" name="Proc. Natl. Acad. Sci. U.S.A.">
        <title>The louse-borne human pathogen Bartonella quintana is a genomic derivative of the zoonotic agent Bartonella henselae.</title>
        <authorList>
            <person name="Alsmark U.C.M."/>
            <person name="Frank A.C."/>
            <person name="Karlberg E.O."/>
            <person name="Legault B.-A."/>
            <person name="Ardell D.H."/>
            <person name="Canbaeck B."/>
            <person name="Eriksson A.-S."/>
            <person name="Naeslund A.K."/>
            <person name="Handley S.A."/>
            <person name="Huvet M."/>
            <person name="La Scola B."/>
            <person name="Holmberg M."/>
            <person name="Andersson S.G.E."/>
        </authorList>
    </citation>
    <scope>NUCLEOTIDE SEQUENCE [LARGE SCALE GENOMIC DNA]</scope>
    <source>
        <strain>ATCC 49882 / DSM 28221 / CCUG 30454 / Houston 1</strain>
    </source>
</reference>
<accession>Q6G1L3</accession>
<gene>
    <name evidence="1" type="primary">gloB</name>
    <name type="ordered locus">BH16640</name>
</gene>
<proteinExistence type="inferred from homology"/>
<keyword id="KW-0378">Hydrolase</keyword>
<keyword id="KW-0479">Metal-binding</keyword>
<keyword id="KW-0862">Zinc</keyword>
<protein>
    <recommendedName>
        <fullName evidence="1">Hydroxyacylglutathione hydrolase</fullName>
        <ecNumber evidence="1">3.1.2.6</ecNumber>
    </recommendedName>
    <alternativeName>
        <fullName evidence="1">Glyoxalase II</fullName>
        <shortName evidence="1">Glx II</shortName>
    </alternativeName>
</protein>
<evidence type="ECO:0000255" key="1">
    <source>
        <dbReference type="HAMAP-Rule" id="MF_01374"/>
    </source>
</evidence>
<dbReference type="EC" id="3.1.2.6" evidence="1"/>
<dbReference type="EMBL" id="BX897699">
    <property type="protein sequence ID" value="CAF28425.1"/>
    <property type="molecule type" value="Genomic_DNA"/>
</dbReference>
<dbReference type="RefSeq" id="WP_011181424.1">
    <property type="nucleotide sequence ID" value="NC_005956.1"/>
</dbReference>
<dbReference type="SMR" id="Q6G1L3"/>
<dbReference type="PaxDb" id="283166-BH16640"/>
<dbReference type="EnsemblBacteria" id="CAF28425">
    <property type="protein sequence ID" value="CAF28425"/>
    <property type="gene ID" value="BH16640"/>
</dbReference>
<dbReference type="GeneID" id="92986283"/>
<dbReference type="KEGG" id="bhe:BH16640"/>
<dbReference type="eggNOG" id="COG0491">
    <property type="taxonomic scope" value="Bacteria"/>
</dbReference>
<dbReference type="OrthoDB" id="9802248at2"/>
<dbReference type="UniPathway" id="UPA00619">
    <property type="reaction ID" value="UER00676"/>
</dbReference>
<dbReference type="Proteomes" id="UP000000421">
    <property type="component" value="Chromosome"/>
</dbReference>
<dbReference type="GO" id="GO:0004416">
    <property type="term" value="F:hydroxyacylglutathione hydrolase activity"/>
    <property type="evidence" value="ECO:0007669"/>
    <property type="project" value="UniProtKB-UniRule"/>
</dbReference>
<dbReference type="GO" id="GO:0046872">
    <property type="term" value="F:metal ion binding"/>
    <property type="evidence" value="ECO:0007669"/>
    <property type="project" value="UniProtKB-KW"/>
</dbReference>
<dbReference type="GO" id="GO:0019243">
    <property type="term" value="P:methylglyoxal catabolic process to D-lactate via S-lactoyl-glutathione"/>
    <property type="evidence" value="ECO:0007669"/>
    <property type="project" value="InterPro"/>
</dbReference>
<dbReference type="CDD" id="cd07723">
    <property type="entry name" value="hydroxyacylglutathione_hydrolase_MBL-fold"/>
    <property type="match status" value="1"/>
</dbReference>
<dbReference type="Gene3D" id="3.60.15.10">
    <property type="entry name" value="Ribonuclease Z/Hydroxyacylglutathione hydrolase-like"/>
    <property type="match status" value="1"/>
</dbReference>
<dbReference type="HAMAP" id="MF_01374">
    <property type="entry name" value="Glyoxalase_2"/>
    <property type="match status" value="1"/>
</dbReference>
<dbReference type="InterPro" id="IPR035680">
    <property type="entry name" value="Clx_II_MBL"/>
</dbReference>
<dbReference type="InterPro" id="IPR050110">
    <property type="entry name" value="Glyoxalase_II_hydrolase"/>
</dbReference>
<dbReference type="InterPro" id="IPR032282">
    <property type="entry name" value="HAGH_C"/>
</dbReference>
<dbReference type="InterPro" id="IPR017782">
    <property type="entry name" value="Hydroxyacylglutathione_Hdrlase"/>
</dbReference>
<dbReference type="InterPro" id="IPR001279">
    <property type="entry name" value="Metallo-B-lactamas"/>
</dbReference>
<dbReference type="InterPro" id="IPR036866">
    <property type="entry name" value="RibonucZ/Hydroxyglut_hydro"/>
</dbReference>
<dbReference type="NCBIfam" id="TIGR03413">
    <property type="entry name" value="GSH_gloB"/>
    <property type="match status" value="1"/>
</dbReference>
<dbReference type="PANTHER" id="PTHR43705">
    <property type="entry name" value="HYDROXYACYLGLUTATHIONE HYDROLASE"/>
    <property type="match status" value="1"/>
</dbReference>
<dbReference type="PANTHER" id="PTHR43705:SF1">
    <property type="entry name" value="HYDROXYACYLGLUTATHIONE HYDROLASE GLOB"/>
    <property type="match status" value="1"/>
</dbReference>
<dbReference type="Pfam" id="PF16123">
    <property type="entry name" value="HAGH_C"/>
    <property type="match status" value="1"/>
</dbReference>
<dbReference type="Pfam" id="PF00753">
    <property type="entry name" value="Lactamase_B"/>
    <property type="match status" value="1"/>
</dbReference>
<dbReference type="PIRSF" id="PIRSF005457">
    <property type="entry name" value="Glx"/>
    <property type="match status" value="1"/>
</dbReference>
<dbReference type="SMART" id="SM00849">
    <property type="entry name" value="Lactamase_B"/>
    <property type="match status" value="1"/>
</dbReference>
<dbReference type="SUPFAM" id="SSF56281">
    <property type="entry name" value="Metallo-hydrolase/oxidoreductase"/>
    <property type="match status" value="1"/>
</dbReference>
<name>GLO2_BARHE</name>